<dbReference type="EC" id="1.14.-.-" evidence="1"/>
<dbReference type="EMBL" id="CP000503">
    <property type="protein sequence ID" value="ABM24716.1"/>
    <property type="molecule type" value="Genomic_DNA"/>
</dbReference>
<dbReference type="RefSeq" id="WP_011789208.1">
    <property type="nucleotide sequence ID" value="NC_008750.1"/>
</dbReference>
<dbReference type="SMR" id="A1RJ71"/>
<dbReference type="KEGG" id="shw:Sputw3181_1881"/>
<dbReference type="HOGENOM" id="CLU_038878_0_0_6"/>
<dbReference type="Proteomes" id="UP000002597">
    <property type="component" value="Chromosome"/>
</dbReference>
<dbReference type="GO" id="GO:0016705">
    <property type="term" value="F:oxidoreductase activity, acting on paired donors, with incorporation or reduction of molecular oxygen"/>
    <property type="evidence" value="ECO:0007669"/>
    <property type="project" value="UniProtKB-UniRule"/>
</dbReference>
<dbReference type="GO" id="GO:0006400">
    <property type="term" value="P:tRNA modification"/>
    <property type="evidence" value="ECO:0007669"/>
    <property type="project" value="UniProtKB-UniRule"/>
</dbReference>
<dbReference type="CDD" id="cd01518">
    <property type="entry name" value="RHOD_YceA"/>
    <property type="match status" value="1"/>
</dbReference>
<dbReference type="Gene3D" id="3.30.70.100">
    <property type="match status" value="1"/>
</dbReference>
<dbReference type="Gene3D" id="3.40.250.10">
    <property type="entry name" value="Rhodanese-like domain"/>
    <property type="match status" value="1"/>
</dbReference>
<dbReference type="HAMAP" id="MF_00469">
    <property type="entry name" value="TrhO"/>
    <property type="match status" value="1"/>
</dbReference>
<dbReference type="InterPro" id="IPR001763">
    <property type="entry name" value="Rhodanese-like_dom"/>
</dbReference>
<dbReference type="InterPro" id="IPR036873">
    <property type="entry name" value="Rhodanese-like_dom_sf"/>
</dbReference>
<dbReference type="InterPro" id="IPR020936">
    <property type="entry name" value="TrhO"/>
</dbReference>
<dbReference type="InterPro" id="IPR040503">
    <property type="entry name" value="TRHO_N"/>
</dbReference>
<dbReference type="NCBIfam" id="NF001136">
    <property type="entry name" value="PRK00142.1-4"/>
    <property type="match status" value="1"/>
</dbReference>
<dbReference type="PANTHER" id="PTHR43268:SF3">
    <property type="entry name" value="RHODANESE-LIKE DOMAIN-CONTAINING PROTEIN 7-RELATED"/>
    <property type="match status" value="1"/>
</dbReference>
<dbReference type="PANTHER" id="PTHR43268">
    <property type="entry name" value="THIOSULFATE SULFURTRANSFERASE/RHODANESE-LIKE DOMAIN-CONTAINING PROTEIN 2"/>
    <property type="match status" value="1"/>
</dbReference>
<dbReference type="Pfam" id="PF00581">
    <property type="entry name" value="Rhodanese"/>
    <property type="match status" value="1"/>
</dbReference>
<dbReference type="Pfam" id="PF17773">
    <property type="entry name" value="UPF0176_N"/>
    <property type="match status" value="1"/>
</dbReference>
<dbReference type="SMART" id="SM00450">
    <property type="entry name" value="RHOD"/>
    <property type="match status" value="1"/>
</dbReference>
<dbReference type="SUPFAM" id="SSF52821">
    <property type="entry name" value="Rhodanese/Cell cycle control phosphatase"/>
    <property type="match status" value="1"/>
</dbReference>
<dbReference type="PROSITE" id="PS50206">
    <property type="entry name" value="RHODANESE_3"/>
    <property type="match status" value="1"/>
</dbReference>
<name>TRHO_SHESW</name>
<sequence length="334" mass="37950">MTKVVVCALYKFVSLPHFESIRAPLLAMMEQAEVKGTLLLASEGINGTVAGNQEAIEALLAWLNNQNGLDNIVYKLSFDDEMPFYRTKVKLKNEIVTMGVEGIDPLKVVGTYVKPKDWNALISDPDVILVDTRNDYEVQIGTFKNAINPVTETFREFPEYVKQNLDPVKHKKVAMFCTGGIRCEKSTAYLKEQGFEEVYHLEGGILKYLEEVKQEESLWEGECFVFDNRVAVNHELKKGQYDQCNACRMPITEAEKRSPAYVQGVSCPHCVDKISDEQRKRFVERERQVNLAKARNEAHIGSDVNQVIEARREKKEALRKLAAQKNKLKQTGTV</sequence>
<comment type="function">
    <text evidence="1">Catalyzes oxygen-dependent 5-hydroxyuridine (ho5U) modification at position 34 in tRNAs.</text>
</comment>
<comment type="catalytic activity">
    <reaction evidence="1">
        <text>uridine(34) in tRNA + AH2 + O2 = 5-hydroxyuridine(34) in tRNA + A + H2O</text>
        <dbReference type="Rhea" id="RHEA:64224"/>
        <dbReference type="Rhea" id="RHEA-COMP:11727"/>
        <dbReference type="Rhea" id="RHEA-COMP:13381"/>
        <dbReference type="ChEBI" id="CHEBI:13193"/>
        <dbReference type="ChEBI" id="CHEBI:15377"/>
        <dbReference type="ChEBI" id="CHEBI:15379"/>
        <dbReference type="ChEBI" id="CHEBI:17499"/>
        <dbReference type="ChEBI" id="CHEBI:65315"/>
        <dbReference type="ChEBI" id="CHEBI:136877"/>
    </reaction>
</comment>
<comment type="similarity">
    <text evidence="1">Belongs to the TrhO family.</text>
</comment>
<protein>
    <recommendedName>
        <fullName evidence="1">tRNA uridine(34) hydroxylase</fullName>
        <ecNumber evidence="1">1.14.-.-</ecNumber>
    </recommendedName>
    <alternativeName>
        <fullName evidence="1">tRNA hydroxylation protein O</fullName>
    </alternativeName>
</protein>
<proteinExistence type="inferred from homology"/>
<organism>
    <name type="scientific">Shewanella sp. (strain W3-18-1)</name>
    <dbReference type="NCBI Taxonomy" id="351745"/>
    <lineage>
        <taxon>Bacteria</taxon>
        <taxon>Pseudomonadati</taxon>
        <taxon>Pseudomonadota</taxon>
        <taxon>Gammaproteobacteria</taxon>
        <taxon>Alteromonadales</taxon>
        <taxon>Shewanellaceae</taxon>
        <taxon>Shewanella</taxon>
    </lineage>
</organism>
<feature type="chain" id="PRO_1000013777" description="tRNA uridine(34) hydroxylase">
    <location>
        <begin position="1"/>
        <end position="334"/>
    </location>
</feature>
<feature type="domain" description="Rhodanese" evidence="1">
    <location>
        <begin position="123"/>
        <end position="217"/>
    </location>
</feature>
<feature type="active site" description="Cysteine persulfide intermediate" evidence="1">
    <location>
        <position position="177"/>
    </location>
</feature>
<evidence type="ECO:0000255" key="1">
    <source>
        <dbReference type="HAMAP-Rule" id="MF_00469"/>
    </source>
</evidence>
<reference key="1">
    <citation type="submission" date="2006-12" db="EMBL/GenBank/DDBJ databases">
        <title>Complete sequence of Shewanella sp. W3-18-1.</title>
        <authorList>
            <consortium name="US DOE Joint Genome Institute"/>
            <person name="Copeland A."/>
            <person name="Lucas S."/>
            <person name="Lapidus A."/>
            <person name="Barry K."/>
            <person name="Detter J.C."/>
            <person name="Glavina del Rio T."/>
            <person name="Hammon N."/>
            <person name="Israni S."/>
            <person name="Dalin E."/>
            <person name="Tice H."/>
            <person name="Pitluck S."/>
            <person name="Chain P."/>
            <person name="Malfatti S."/>
            <person name="Shin M."/>
            <person name="Vergez L."/>
            <person name="Schmutz J."/>
            <person name="Larimer F."/>
            <person name="Land M."/>
            <person name="Hauser L."/>
            <person name="Kyrpides N."/>
            <person name="Lykidis A."/>
            <person name="Tiedje J."/>
            <person name="Richardson P."/>
        </authorList>
    </citation>
    <scope>NUCLEOTIDE SEQUENCE [LARGE SCALE GENOMIC DNA]</scope>
    <source>
        <strain>W3-18-1</strain>
    </source>
</reference>
<accession>A1RJ71</accession>
<keyword id="KW-0560">Oxidoreductase</keyword>
<keyword id="KW-0819">tRNA processing</keyword>
<gene>
    <name evidence="1" type="primary">trhO</name>
    <name type="ordered locus">Sputw3181_1881</name>
</gene>